<dbReference type="EMBL" id="DP000009">
    <property type="protein sequence ID" value="ABF96744.1"/>
    <property type="molecule type" value="Genomic_DNA"/>
</dbReference>
<dbReference type="EMBL" id="AP008209">
    <property type="protein sequence ID" value="BAF12333.1"/>
    <property type="molecule type" value="Genomic_DNA"/>
</dbReference>
<dbReference type="EMBL" id="AP014959">
    <property type="protein sequence ID" value="BAS84802.1"/>
    <property type="molecule type" value="Genomic_DNA"/>
</dbReference>
<dbReference type="EMBL" id="CM000140">
    <property type="protein sequence ID" value="EAZ27412.1"/>
    <property type="molecule type" value="Genomic_DNA"/>
</dbReference>
<dbReference type="EMBL" id="AK102768">
    <property type="protein sequence ID" value="BAG95709.1"/>
    <property type="molecule type" value="mRNA"/>
</dbReference>
<dbReference type="RefSeq" id="XP_015628386.1">
    <property type="nucleotide sequence ID" value="XM_015772900.1"/>
</dbReference>
<dbReference type="SMR" id="Q10J94"/>
<dbReference type="FunCoup" id="Q10J94">
    <property type="interactions" value="138"/>
</dbReference>
<dbReference type="STRING" id="39947.Q10J94"/>
<dbReference type="MEROPS" id="I25.056"/>
<dbReference type="PaxDb" id="39947-Q10J94"/>
<dbReference type="EnsemblPlants" id="Os03t0429000-01">
    <property type="protein sequence ID" value="Os03t0429000-01"/>
    <property type="gene ID" value="Os03g0429000"/>
</dbReference>
<dbReference type="Gramene" id="Os03t0429000-01">
    <property type="protein sequence ID" value="Os03t0429000-01"/>
    <property type="gene ID" value="Os03g0429000"/>
</dbReference>
<dbReference type="KEGG" id="dosa:Os03g0429000"/>
<dbReference type="eggNOG" id="ENOG502S46Q">
    <property type="taxonomic scope" value="Eukaryota"/>
</dbReference>
<dbReference type="HOGENOM" id="CLU_113093_2_2_1"/>
<dbReference type="InParanoid" id="Q10J94"/>
<dbReference type="OMA" id="FVYEQVW"/>
<dbReference type="OrthoDB" id="2016588at2759"/>
<dbReference type="Proteomes" id="UP000000763">
    <property type="component" value="Chromosome 3"/>
</dbReference>
<dbReference type="Proteomes" id="UP000007752">
    <property type="component" value="Chromosome 3"/>
</dbReference>
<dbReference type="Proteomes" id="UP000059680">
    <property type="component" value="Chromosome 3"/>
</dbReference>
<dbReference type="GO" id="GO:0005576">
    <property type="term" value="C:extracellular region"/>
    <property type="evidence" value="ECO:0007669"/>
    <property type="project" value="UniProtKB-SubCell"/>
</dbReference>
<dbReference type="GO" id="GO:0004869">
    <property type="term" value="F:cysteine-type endopeptidase inhibitor activity"/>
    <property type="evidence" value="ECO:0007669"/>
    <property type="project" value="UniProtKB-KW"/>
</dbReference>
<dbReference type="GO" id="GO:0006952">
    <property type="term" value="P:defense response"/>
    <property type="evidence" value="ECO:0007669"/>
    <property type="project" value="UniProtKB-KW"/>
</dbReference>
<dbReference type="CDD" id="cd00042">
    <property type="entry name" value="CY"/>
    <property type="match status" value="1"/>
</dbReference>
<dbReference type="Gene3D" id="3.10.450.10">
    <property type="match status" value="1"/>
</dbReference>
<dbReference type="InterPro" id="IPR027214">
    <property type="entry name" value="Cystatin"/>
</dbReference>
<dbReference type="InterPro" id="IPR000010">
    <property type="entry name" value="Cystatin_dom"/>
</dbReference>
<dbReference type="InterPro" id="IPR046350">
    <property type="entry name" value="Cystatin_sf"/>
</dbReference>
<dbReference type="InterPro" id="IPR018073">
    <property type="entry name" value="Prot_inh_cystat_CS"/>
</dbReference>
<dbReference type="PANTHER" id="PTHR47116">
    <property type="entry name" value="PHLOEM FILAMENT PROTEIN"/>
    <property type="match status" value="1"/>
</dbReference>
<dbReference type="Pfam" id="PF16845">
    <property type="entry name" value="SQAPI"/>
    <property type="match status" value="1"/>
</dbReference>
<dbReference type="SMART" id="SM00043">
    <property type="entry name" value="CY"/>
    <property type="match status" value="1"/>
</dbReference>
<dbReference type="SUPFAM" id="SSF54403">
    <property type="entry name" value="Cystatin/monellin"/>
    <property type="match status" value="1"/>
</dbReference>
<dbReference type="PROSITE" id="PS00287">
    <property type="entry name" value="CYSTATIN"/>
    <property type="match status" value="1"/>
</dbReference>
<proteinExistence type="evidence at transcript level"/>
<name>CYT8_ORYSJ</name>
<comment type="function">
    <text evidence="1">Specific inhibitor of cysteine proteinases. Probably involved in the regulation of endogenous processes and in defense against pests and pathogens (By similarity).</text>
</comment>
<comment type="subcellular location">
    <subcellularLocation>
        <location evidence="3">Secreted</location>
    </subcellularLocation>
</comment>
<comment type="similarity">
    <text evidence="3">Belongs to the cystatin family. Phytocystatin subfamily.</text>
</comment>
<feature type="signal peptide" evidence="2">
    <location>
        <begin position="1"/>
        <end position="19"/>
    </location>
</feature>
<feature type="chain" id="PRO_0000277505" description="Cysteine proteinase inhibitor 8">
    <location>
        <begin position="20"/>
        <end position="123"/>
    </location>
</feature>
<feature type="domain" description="Cystatin">
    <location>
        <begin position="33"/>
        <end position="91"/>
    </location>
</feature>
<feature type="short sequence motif" description="Secondary area of contact" evidence="1">
    <location>
        <begin position="76"/>
        <end position="80"/>
    </location>
</feature>
<feature type="site" description="Reactive site" evidence="1">
    <location>
        <position position="33"/>
    </location>
</feature>
<accession>Q10J94</accession>
<accession>A3AJC3</accession>
<protein>
    <recommendedName>
        <fullName>Cysteine proteinase inhibitor 8</fullName>
    </recommendedName>
    <alternativeName>
        <fullName>Oryzacystatin VIII</fullName>
        <shortName>OC-VIII</shortName>
    </alternativeName>
    <alternativeName>
        <fullName>Oryzacystatin-8</fullName>
    </alternativeName>
</protein>
<evidence type="ECO:0000250" key="1"/>
<evidence type="ECO:0000255" key="2"/>
<evidence type="ECO:0000305" key="3"/>
<evidence type="ECO:0000312" key="4">
    <source>
        <dbReference type="EMBL" id="EAZ27412.1"/>
    </source>
</evidence>
<sequence>MARIPLLLALLLAVSAAAAAQVGGNRGHGPLVGGWSPITDVGDPHIQELGGWAVERHASLSSDGLRFRRVTSGEQQVVSGMNYRLVVSASDPAGATASYVAVVYEQSWTNTRQLTSFKPAAAH</sequence>
<reference key="1">
    <citation type="journal article" date="2005" name="Genome Res.">
        <title>Sequence, annotation, and analysis of synteny between rice chromosome 3 and diverged grass species.</title>
        <authorList>
            <consortium name="The rice chromosome 3 sequencing consortium"/>
            <person name="Buell C.R."/>
            <person name="Yuan Q."/>
            <person name="Ouyang S."/>
            <person name="Liu J."/>
            <person name="Zhu W."/>
            <person name="Wang A."/>
            <person name="Maiti R."/>
            <person name="Haas B."/>
            <person name="Wortman J."/>
            <person name="Pertea M."/>
            <person name="Jones K.M."/>
            <person name="Kim M."/>
            <person name="Overton L."/>
            <person name="Tsitrin T."/>
            <person name="Fadrosh D."/>
            <person name="Bera J."/>
            <person name="Weaver B."/>
            <person name="Jin S."/>
            <person name="Johri S."/>
            <person name="Reardon M."/>
            <person name="Webb K."/>
            <person name="Hill J."/>
            <person name="Moffat K."/>
            <person name="Tallon L."/>
            <person name="Van Aken S."/>
            <person name="Lewis M."/>
            <person name="Utterback T."/>
            <person name="Feldblyum T."/>
            <person name="Zismann V."/>
            <person name="Iobst S."/>
            <person name="Hsiao J."/>
            <person name="de Vazeille A.R."/>
            <person name="Salzberg S.L."/>
            <person name="White O."/>
            <person name="Fraser C.M."/>
            <person name="Yu Y."/>
            <person name="Kim H."/>
            <person name="Rambo T."/>
            <person name="Currie J."/>
            <person name="Collura K."/>
            <person name="Kernodle-Thompson S."/>
            <person name="Wei F."/>
            <person name="Kudrna K."/>
            <person name="Ammiraju J.S.S."/>
            <person name="Luo M."/>
            <person name="Goicoechea J.L."/>
            <person name="Wing R.A."/>
            <person name="Henry D."/>
            <person name="Oates R."/>
            <person name="Palmer M."/>
            <person name="Pries G."/>
            <person name="Saski C."/>
            <person name="Simmons J."/>
            <person name="Soderlund C."/>
            <person name="Nelson W."/>
            <person name="de la Bastide M."/>
            <person name="Spiegel L."/>
            <person name="Nascimento L."/>
            <person name="Huang E."/>
            <person name="Preston R."/>
            <person name="Zutavern T."/>
            <person name="Palmer L."/>
            <person name="O'Shaughnessy A."/>
            <person name="Dike S."/>
            <person name="McCombie W.R."/>
            <person name="Minx P."/>
            <person name="Cordum H."/>
            <person name="Wilson R."/>
            <person name="Jin W."/>
            <person name="Lee H.R."/>
            <person name="Jiang J."/>
            <person name="Jackson S."/>
        </authorList>
    </citation>
    <scope>NUCLEOTIDE SEQUENCE [LARGE SCALE GENOMIC DNA]</scope>
    <source>
        <strain>cv. Nipponbare</strain>
    </source>
</reference>
<reference key="2">
    <citation type="journal article" date="2005" name="Nature">
        <title>The map-based sequence of the rice genome.</title>
        <authorList>
            <consortium name="International rice genome sequencing project (IRGSP)"/>
        </authorList>
    </citation>
    <scope>NUCLEOTIDE SEQUENCE [LARGE SCALE GENOMIC DNA]</scope>
    <source>
        <strain>cv. Nipponbare</strain>
    </source>
</reference>
<reference key="3">
    <citation type="journal article" date="2008" name="Nucleic Acids Res.">
        <title>The rice annotation project database (RAP-DB): 2008 update.</title>
        <authorList>
            <consortium name="The rice annotation project (RAP)"/>
        </authorList>
    </citation>
    <scope>GENOME REANNOTATION</scope>
    <source>
        <strain>cv. Nipponbare</strain>
    </source>
</reference>
<reference key="4">
    <citation type="journal article" date="2013" name="Rice">
        <title>Improvement of the Oryza sativa Nipponbare reference genome using next generation sequence and optical map data.</title>
        <authorList>
            <person name="Kawahara Y."/>
            <person name="de la Bastide M."/>
            <person name="Hamilton J.P."/>
            <person name="Kanamori H."/>
            <person name="McCombie W.R."/>
            <person name="Ouyang S."/>
            <person name="Schwartz D.C."/>
            <person name="Tanaka T."/>
            <person name="Wu J."/>
            <person name="Zhou S."/>
            <person name="Childs K.L."/>
            <person name="Davidson R.M."/>
            <person name="Lin H."/>
            <person name="Quesada-Ocampo L."/>
            <person name="Vaillancourt B."/>
            <person name="Sakai H."/>
            <person name="Lee S.S."/>
            <person name="Kim J."/>
            <person name="Numa H."/>
            <person name="Itoh T."/>
            <person name="Buell C.R."/>
            <person name="Matsumoto T."/>
        </authorList>
    </citation>
    <scope>GENOME REANNOTATION</scope>
    <source>
        <strain>cv. Nipponbare</strain>
    </source>
</reference>
<reference key="5">
    <citation type="journal article" date="2005" name="PLoS Biol.">
        <title>The genomes of Oryza sativa: a history of duplications.</title>
        <authorList>
            <person name="Yu J."/>
            <person name="Wang J."/>
            <person name="Lin W."/>
            <person name="Li S."/>
            <person name="Li H."/>
            <person name="Zhou J."/>
            <person name="Ni P."/>
            <person name="Dong W."/>
            <person name="Hu S."/>
            <person name="Zeng C."/>
            <person name="Zhang J."/>
            <person name="Zhang Y."/>
            <person name="Li R."/>
            <person name="Xu Z."/>
            <person name="Li S."/>
            <person name="Li X."/>
            <person name="Zheng H."/>
            <person name="Cong L."/>
            <person name="Lin L."/>
            <person name="Yin J."/>
            <person name="Geng J."/>
            <person name="Li G."/>
            <person name="Shi J."/>
            <person name="Liu J."/>
            <person name="Lv H."/>
            <person name="Li J."/>
            <person name="Wang J."/>
            <person name="Deng Y."/>
            <person name="Ran L."/>
            <person name="Shi X."/>
            <person name="Wang X."/>
            <person name="Wu Q."/>
            <person name="Li C."/>
            <person name="Ren X."/>
            <person name="Wang J."/>
            <person name="Wang X."/>
            <person name="Li D."/>
            <person name="Liu D."/>
            <person name="Zhang X."/>
            <person name="Ji Z."/>
            <person name="Zhao W."/>
            <person name="Sun Y."/>
            <person name="Zhang Z."/>
            <person name="Bao J."/>
            <person name="Han Y."/>
            <person name="Dong L."/>
            <person name="Ji J."/>
            <person name="Chen P."/>
            <person name="Wu S."/>
            <person name="Liu J."/>
            <person name="Xiao Y."/>
            <person name="Bu D."/>
            <person name="Tan J."/>
            <person name="Yang L."/>
            <person name="Ye C."/>
            <person name="Zhang J."/>
            <person name="Xu J."/>
            <person name="Zhou Y."/>
            <person name="Yu Y."/>
            <person name="Zhang B."/>
            <person name="Zhuang S."/>
            <person name="Wei H."/>
            <person name="Liu B."/>
            <person name="Lei M."/>
            <person name="Yu H."/>
            <person name="Li Y."/>
            <person name="Xu H."/>
            <person name="Wei S."/>
            <person name="He X."/>
            <person name="Fang L."/>
            <person name="Zhang Z."/>
            <person name="Zhang Y."/>
            <person name="Huang X."/>
            <person name="Su Z."/>
            <person name="Tong W."/>
            <person name="Li J."/>
            <person name="Tong Z."/>
            <person name="Li S."/>
            <person name="Ye J."/>
            <person name="Wang L."/>
            <person name="Fang L."/>
            <person name="Lei T."/>
            <person name="Chen C.-S."/>
            <person name="Chen H.-C."/>
            <person name="Xu Z."/>
            <person name="Li H."/>
            <person name="Huang H."/>
            <person name="Zhang F."/>
            <person name="Xu H."/>
            <person name="Li N."/>
            <person name="Zhao C."/>
            <person name="Li S."/>
            <person name="Dong L."/>
            <person name="Huang Y."/>
            <person name="Li L."/>
            <person name="Xi Y."/>
            <person name="Qi Q."/>
            <person name="Li W."/>
            <person name="Zhang B."/>
            <person name="Hu W."/>
            <person name="Zhang Y."/>
            <person name="Tian X."/>
            <person name="Jiao Y."/>
            <person name="Liang X."/>
            <person name="Jin J."/>
            <person name="Gao L."/>
            <person name="Zheng W."/>
            <person name="Hao B."/>
            <person name="Liu S.-M."/>
            <person name="Wang W."/>
            <person name="Yuan L."/>
            <person name="Cao M."/>
            <person name="McDermott J."/>
            <person name="Samudrala R."/>
            <person name="Wang J."/>
            <person name="Wong G.K.-S."/>
            <person name="Yang H."/>
        </authorList>
    </citation>
    <scope>NUCLEOTIDE SEQUENCE [LARGE SCALE GENOMIC DNA]</scope>
    <source>
        <strain>cv. Nipponbare</strain>
    </source>
</reference>
<reference key="6">
    <citation type="journal article" date="2003" name="Science">
        <title>Collection, mapping, and annotation of over 28,000 cDNA clones from japonica rice.</title>
        <authorList>
            <consortium name="The rice full-length cDNA consortium"/>
        </authorList>
    </citation>
    <scope>NUCLEOTIDE SEQUENCE [LARGE SCALE MRNA]</scope>
    <source>
        <strain>cv. Nipponbare</strain>
    </source>
</reference>
<reference key="7">
    <citation type="journal article" date="2005" name="Mol. Genet. Genomics">
        <title>Comparative phylogenetic analysis of cystatin gene families from arabidopsis, rice and barley.</title>
        <authorList>
            <person name="Martinez M."/>
            <person name="Abraham Z."/>
            <person name="Carbonero P."/>
            <person name="Diaz I."/>
        </authorList>
    </citation>
    <scope>GENE FAMILY</scope>
</reference>
<gene>
    <name type="ordered locus">Os03g0429000</name>
    <name type="ordered locus">LOC_Os03g31510</name>
    <name evidence="4" type="ORF">OsJ_11358</name>
</gene>
<organism>
    <name type="scientific">Oryza sativa subsp. japonica</name>
    <name type="common">Rice</name>
    <dbReference type="NCBI Taxonomy" id="39947"/>
    <lineage>
        <taxon>Eukaryota</taxon>
        <taxon>Viridiplantae</taxon>
        <taxon>Streptophyta</taxon>
        <taxon>Embryophyta</taxon>
        <taxon>Tracheophyta</taxon>
        <taxon>Spermatophyta</taxon>
        <taxon>Magnoliopsida</taxon>
        <taxon>Liliopsida</taxon>
        <taxon>Poales</taxon>
        <taxon>Poaceae</taxon>
        <taxon>BOP clade</taxon>
        <taxon>Oryzoideae</taxon>
        <taxon>Oryzeae</taxon>
        <taxon>Oryzinae</taxon>
        <taxon>Oryza</taxon>
        <taxon>Oryza sativa</taxon>
    </lineage>
</organism>
<keyword id="KW-0611">Plant defense</keyword>
<keyword id="KW-0646">Protease inhibitor</keyword>
<keyword id="KW-1185">Reference proteome</keyword>
<keyword id="KW-0964">Secreted</keyword>
<keyword id="KW-0732">Signal</keyword>
<keyword id="KW-0789">Thiol protease inhibitor</keyword>